<feature type="chain" id="PRO_1000131340" description="Phosphatidylserine decarboxylase beta chain" evidence="1">
    <location>
        <begin position="1"/>
        <end position="225"/>
    </location>
</feature>
<feature type="chain" id="PRO_1000131341" description="Phosphatidylserine decarboxylase alpha chain" evidence="1">
    <location>
        <begin position="226"/>
        <end position="262"/>
    </location>
</feature>
<feature type="active site" description="Charge relay system; for autoendoproteolytic cleavage activity" evidence="1">
    <location>
        <position position="86"/>
    </location>
</feature>
<feature type="active site" description="Charge relay system; for autoendoproteolytic cleavage activity" evidence="1">
    <location>
        <position position="142"/>
    </location>
</feature>
<feature type="active site" description="Charge relay system; for autoendoproteolytic cleavage activity" evidence="1">
    <location>
        <position position="226"/>
    </location>
</feature>
<feature type="active site" description="Schiff-base intermediate with substrate; via pyruvic acid; for decarboxylase activity" evidence="1">
    <location>
        <position position="226"/>
    </location>
</feature>
<feature type="site" description="Cleavage (non-hydrolytic); by autocatalysis" evidence="1">
    <location>
        <begin position="225"/>
        <end position="226"/>
    </location>
</feature>
<feature type="modified residue" description="Pyruvic acid (Ser); by autocatalysis" evidence="1">
    <location>
        <position position="226"/>
    </location>
</feature>
<protein>
    <recommendedName>
        <fullName evidence="1">Phosphatidylserine decarboxylase proenzyme</fullName>
        <ecNumber evidence="1">4.1.1.65</ecNumber>
    </recommendedName>
    <component>
        <recommendedName>
            <fullName evidence="1">Phosphatidylserine decarboxylase alpha chain</fullName>
        </recommendedName>
    </component>
    <component>
        <recommendedName>
            <fullName evidence="1">Phosphatidylserine decarboxylase beta chain</fullName>
        </recommendedName>
    </component>
</protein>
<proteinExistence type="inferred from homology"/>
<reference key="1">
    <citation type="submission" date="2008-10" db="EMBL/GenBank/DDBJ databases">
        <title>Genome sequence of Bacillus cereus AH820.</title>
        <authorList>
            <person name="Dodson R.J."/>
            <person name="Durkin A.S."/>
            <person name="Rosovitz M.J."/>
            <person name="Rasko D.A."/>
            <person name="Hoffmaster A."/>
            <person name="Ravel J."/>
            <person name="Sutton G."/>
        </authorList>
    </citation>
    <scope>NUCLEOTIDE SEQUENCE [LARGE SCALE GENOMIC DNA]</scope>
    <source>
        <strain>AH820</strain>
    </source>
</reference>
<keyword id="KW-1003">Cell membrane</keyword>
<keyword id="KW-0210">Decarboxylase</keyword>
<keyword id="KW-0444">Lipid biosynthesis</keyword>
<keyword id="KW-0443">Lipid metabolism</keyword>
<keyword id="KW-0456">Lyase</keyword>
<keyword id="KW-0472">Membrane</keyword>
<keyword id="KW-0594">Phospholipid biosynthesis</keyword>
<keyword id="KW-1208">Phospholipid metabolism</keyword>
<keyword id="KW-0670">Pyruvate</keyword>
<keyword id="KW-0865">Zymogen</keyword>
<name>PSD_BACC0</name>
<comment type="function">
    <text evidence="1">Catalyzes the formation of phosphatidylethanolamine (PtdEtn) from phosphatidylserine (PtdSer).</text>
</comment>
<comment type="catalytic activity">
    <reaction evidence="1">
        <text>a 1,2-diacyl-sn-glycero-3-phospho-L-serine + H(+) = a 1,2-diacyl-sn-glycero-3-phosphoethanolamine + CO2</text>
        <dbReference type="Rhea" id="RHEA:20828"/>
        <dbReference type="ChEBI" id="CHEBI:15378"/>
        <dbReference type="ChEBI" id="CHEBI:16526"/>
        <dbReference type="ChEBI" id="CHEBI:57262"/>
        <dbReference type="ChEBI" id="CHEBI:64612"/>
        <dbReference type="EC" id="4.1.1.65"/>
    </reaction>
</comment>
<comment type="cofactor">
    <cofactor evidence="1">
        <name>pyruvate</name>
        <dbReference type="ChEBI" id="CHEBI:15361"/>
    </cofactor>
    <text evidence="1">Binds 1 pyruvoyl group covalently per subunit.</text>
</comment>
<comment type="pathway">
    <text evidence="1">Phospholipid metabolism; phosphatidylethanolamine biosynthesis; phosphatidylethanolamine from CDP-diacylglycerol: step 2/2.</text>
</comment>
<comment type="subunit">
    <text evidence="1">Heterodimer of a large membrane-associated beta subunit and a small pyruvoyl-containing alpha subunit.</text>
</comment>
<comment type="subcellular location">
    <subcellularLocation>
        <location evidence="1">Cell membrane</location>
        <topology evidence="1">Peripheral membrane protein</topology>
    </subcellularLocation>
</comment>
<comment type="PTM">
    <text evidence="1">Is synthesized initially as an inactive proenzyme. Formation of the active enzyme involves a self-maturation process in which the active site pyruvoyl group is generated from an internal serine residue via an autocatalytic post-translational modification. Two non-identical subunits are generated from the proenzyme in this reaction, and the pyruvate is formed at the N-terminus of the alpha chain, which is derived from the carboxyl end of the proenzyme. The autoendoproteolytic cleavage occurs by a canonical serine protease mechanism, in which the side chain hydroxyl group of the serine supplies its oxygen atom to form the C-terminus of the beta chain, while the remainder of the serine residue undergoes an oxidative deamination to produce ammonia and the pyruvoyl prosthetic group on the alpha chain. During this reaction, the Ser that is part of the protease active site of the proenzyme becomes the pyruvoyl prosthetic group, which constitutes an essential element of the active site of the mature decarboxylase.</text>
</comment>
<comment type="similarity">
    <text evidence="1">Belongs to the phosphatidylserine decarboxylase family. PSD-B subfamily. Prokaryotic type I sub-subfamily.</text>
</comment>
<accession>B7JNX0</accession>
<organism>
    <name type="scientific">Bacillus cereus (strain AH820)</name>
    <dbReference type="NCBI Taxonomy" id="405535"/>
    <lineage>
        <taxon>Bacteria</taxon>
        <taxon>Bacillati</taxon>
        <taxon>Bacillota</taxon>
        <taxon>Bacilli</taxon>
        <taxon>Bacillales</taxon>
        <taxon>Bacillaceae</taxon>
        <taxon>Bacillus</taxon>
        <taxon>Bacillus cereus group</taxon>
    </lineage>
</organism>
<sequence length="262" mass="29918">MRRTLYRLMIELTNGRFTSYILRKFAQSRLSSIIIPSYAKVFQINQDEMEKGLKEYRTLHELFTRKLKEGKRSIDTDASSIVSPVDGVFADHGPIEDTKTFDIKGKRYSIVDMLGNEERAQRYAGGTYMVIYLSPSHYHRIHSPLSGSVTERFVLGRKSYPVNAAGMEYGKEPLSKNYRSVTEVNSDGEHMALVKVGAMFVNSIELLHERDTVQKGEEMAYFTFGSTVVLLFEKDMIEVVQELKSGQELRLGEKIATRLAHK</sequence>
<gene>
    <name evidence="1" type="primary">psd</name>
    <name type="ordered locus">BCAH820_4360</name>
</gene>
<evidence type="ECO:0000255" key="1">
    <source>
        <dbReference type="HAMAP-Rule" id="MF_00662"/>
    </source>
</evidence>
<dbReference type="EC" id="4.1.1.65" evidence="1"/>
<dbReference type="EMBL" id="CP001283">
    <property type="protein sequence ID" value="ACK90646.1"/>
    <property type="molecule type" value="Genomic_DNA"/>
</dbReference>
<dbReference type="RefSeq" id="WP_001254997.1">
    <property type="nucleotide sequence ID" value="NC_011773.1"/>
</dbReference>
<dbReference type="SMR" id="B7JNX0"/>
<dbReference type="KEGG" id="bcu:BCAH820_4360"/>
<dbReference type="HOGENOM" id="CLU_029061_4_0_9"/>
<dbReference type="UniPathway" id="UPA00558">
    <property type="reaction ID" value="UER00616"/>
</dbReference>
<dbReference type="Proteomes" id="UP000001363">
    <property type="component" value="Chromosome"/>
</dbReference>
<dbReference type="GO" id="GO:0005886">
    <property type="term" value="C:plasma membrane"/>
    <property type="evidence" value="ECO:0007669"/>
    <property type="project" value="UniProtKB-SubCell"/>
</dbReference>
<dbReference type="GO" id="GO:0004609">
    <property type="term" value="F:phosphatidylserine decarboxylase activity"/>
    <property type="evidence" value="ECO:0007669"/>
    <property type="project" value="UniProtKB-UniRule"/>
</dbReference>
<dbReference type="GO" id="GO:0006646">
    <property type="term" value="P:phosphatidylethanolamine biosynthetic process"/>
    <property type="evidence" value="ECO:0007669"/>
    <property type="project" value="UniProtKB-UniRule"/>
</dbReference>
<dbReference type="HAMAP" id="MF_00662">
    <property type="entry name" value="PS_decarb_PSD_B_type1"/>
    <property type="match status" value="1"/>
</dbReference>
<dbReference type="InterPro" id="IPR003817">
    <property type="entry name" value="PS_Dcarbxylase"/>
</dbReference>
<dbReference type="InterPro" id="IPR033177">
    <property type="entry name" value="PSD-B"/>
</dbReference>
<dbReference type="InterPro" id="IPR033178">
    <property type="entry name" value="PSD_type1_pro"/>
</dbReference>
<dbReference type="NCBIfam" id="NF002853">
    <property type="entry name" value="PRK03140.1"/>
    <property type="match status" value="1"/>
</dbReference>
<dbReference type="NCBIfam" id="TIGR00163">
    <property type="entry name" value="PS_decarb"/>
    <property type="match status" value="1"/>
</dbReference>
<dbReference type="PANTHER" id="PTHR10067">
    <property type="entry name" value="PHOSPHATIDYLSERINE DECARBOXYLASE"/>
    <property type="match status" value="1"/>
</dbReference>
<dbReference type="PANTHER" id="PTHR10067:SF6">
    <property type="entry name" value="PHOSPHATIDYLSERINE DECARBOXYLASE PROENZYME, MITOCHONDRIAL"/>
    <property type="match status" value="1"/>
</dbReference>
<dbReference type="Pfam" id="PF02666">
    <property type="entry name" value="PS_Dcarbxylase"/>
    <property type="match status" value="1"/>
</dbReference>